<feature type="chain" id="PRO_1000146613" description="UPF0346 protein LAR_0745">
    <location>
        <begin position="1"/>
        <end position="73"/>
    </location>
</feature>
<name>Y745_LIMRJ</name>
<evidence type="ECO:0000255" key="1">
    <source>
        <dbReference type="HAMAP-Rule" id="MF_01538"/>
    </source>
</evidence>
<reference key="1">
    <citation type="journal article" date="2008" name="DNA Res.">
        <title>Comparative genome analysis of Lactobacillus reuteri and Lactobacillus fermentum reveal a genomic island for reuterin and cobalamin production.</title>
        <authorList>
            <person name="Morita H."/>
            <person name="Toh H."/>
            <person name="Fukuda S."/>
            <person name="Horikawa H."/>
            <person name="Oshima K."/>
            <person name="Suzuki T."/>
            <person name="Murakami M."/>
            <person name="Hisamatsu S."/>
            <person name="Kato Y."/>
            <person name="Takizawa T."/>
            <person name="Fukuoka H."/>
            <person name="Yoshimura T."/>
            <person name="Itoh K."/>
            <person name="O'Sullivan D.J."/>
            <person name="McKay L.L."/>
            <person name="Ohno H."/>
            <person name="Kikuchi J."/>
            <person name="Masaoka T."/>
            <person name="Hattori M."/>
        </authorList>
    </citation>
    <scope>NUCLEOTIDE SEQUENCE [LARGE SCALE GENOMIC DNA]</scope>
    <source>
        <strain>JCM 1112</strain>
    </source>
</reference>
<sequence length="73" mass="8803">MRMSFYQFLMTQRNPNSADEVQQFANNAFFDTTFPKHSEDFDEISHYLEENADYLPSMTIFDEAWQRYIDAMN</sequence>
<gene>
    <name type="ordered locus">LAR_0745</name>
</gene>
<comment type="similarity">
    <text evidence="1">Belongs to the UPF0346 family.</text>
</comment>
<dbReference type="EMBL" id="AP007281">
    <property type="protein sequence ID" value="BAG25261.1"/>
    <property type="molecule type" value="Genomic_DNA"/>
</dbReference>
<dbReference type="RefSeq" id="WP_003668092.1">
    <property type="nucleotide sequence ID" value="NC_010609.1"/>
</dbReference>
<dbReference type="SMR" id="B2G729"/>
<dbReference type="KEGG" id="lrf:LAR_0745"/>
<dbReference type="HOGENOM" id="CLU_177534_1_0_9"/>
<dbReference type="Gene3D" id="1.10.150.260">
    <property type="entry name" value="YozE SAM-like"/>
    <property type="match status" value="1"/>
</dbReference>
<dbReference type="HAMAP" id="MF_01538">
    <property type="entry name" value="UPF0346"/>
    <property type="match status" value="1"/>
</dbReference>
<dbReference type="InterPro" id="IPR010673">
    <property type="entry name" value="UPF0346"/>
</dbReference>
<dbReference type="InterPro" id="IPR023089">
    <property type="entry name" value="YozE_SAM-like"/>
</dbReference>
<dbReference type="InterPro" id="IPR036806">
    <property type="entry name" value="YozE_SAM-like_sf"/>
</dbReference>
<dbReference type="NCBIfam" id="NF010193">
    <property type="entry name" value="PRK13672.1"/>
    <property type="match status" value="1"/>
</dbReference>
<dbReference type="Pfam" id="PF06855">
    <property type="entry name" value="YozE_SAM_like"/>
    <property type="match status" value="1"/>
</dbReference>
<dbReference type="PIRSF" id="PIRSF037262">
    <property type="entry name" value="UCP037262"/>
    <property type="match status" value="1"/>
</dbReference>
<dbReference type="SUPFAM" id="SSF140652">
    <property type="entry name" value="YozE-like"/>
    <property type="match status" value="1"/>
</dbReference>
<accession>B2G729</accession>
<protein>
    <recommendedName>
        <fullName evidence="1">UPF0346 protein LAR_0745</fullName>
    </recommendedName>
</protein>
<proteinExistence type="inferred from homology"/>
<organism>
    <name type="scientific">Limosilactobacillus reuteri subsp. reuteri (strain JCM 1112)</name>
    <name type="common">Lactobacillus reuteri</name>
    <dbReference type="NCBI Taxonomy" id="557433"/>
    <lineage>
        <taxon>Bacteria</taxon>
        <taxon>Bacillati</taxon>
        <taxon>Bacillota</taxon>
        <taxon>Bacilli</taxon>
        <taxon>Lactobacillales</taxon>
        <taxon>Lactobacillaceae</taxon>
        <taxon>Limosilactobacillus</taxon>
    </lineage>
</organism>